<protein>
    <recommendedName>
        <fullName evidence="1">Imidazole glycerol phosphate synthase subunit HisF</fullName>
        <ecNumber evidence="1">4.3.2.10</ecNumber>
    </recommendedName>
    <alternativeName>
        <fullName evidence="1">IGP synthase cyclase subunit</fullName>
    </alternativeName>
    <alternativeName>
        <fullName evidence="1">IGP synthase subunit HisF</fullName>
    </alternativeName>
    <alternativeName>
        <fullName evidence="1">ImGP synthase subunit HisF</fullName>
        <shortName evidence="1">IGPS subunit HisF</shortName>
    </alternativeName>
</protein>
<accession>Q1Q835</accession>
<dbReference type="EC" id="4.3.2.10" evidence="1"/>
<dbReference type="EMBL" id="CP000323">
    <property type="protein sequence ID" value="ABE76168.1"/>
    <property type="molecule type" value="Genomic_DNA"/>
</dbReference>
<dbReference type="RefSeq" id="WP_011514696.1">
    <property type="nucleotide sequence ID" value="NC_007969.1"/>
</dbReference>
<dbReference type="SMR" id="Q1Q835"/>
<dbReference type="STRING" id="335284.Pcryo_2391"/>
<dbReference type="KEGG" id="pcr:Pcryo_2391"/>
<dbReference type="eggNOG" id="COG0107">
    <property type="taxonomic scope" value="Bacteria"/>
</dbReference>
<dbReference type="HOGENOM" id="CLU_048577_4_0_6"/>
<dbReference type="UniPathway" id="UPA00031">
    <property type="reaction ID" value="UER00010"/>
</dbReference>
<dbReference type="Proteomes" id="UP000002425">
    <property type="component" value="Chromosome"/>
</dbReference>
<dbReference type="GO" id="GO:0005737">
    <property type="term" value="C:cytoplasm"/>
    <property type="evidence" value="ECO:0007669"/>
    <property type="project" value="UniProtKB-SubCell"/>
</dbReference>
<dbReference type="GO" id="GO:0000107">
    <property type="term" value="F:imidazoleglycerol-phosphate synthase activity"/>
    <property type="evidence" value="ECO:0007669"/>
    <property type="project" value="UniProtKB-UniRule"/>
</dbReference>
<dbReference type="GO" id="GO:0016829">
    <property type="term" value="F:lyase activity"/>
    <property type="evidence" value="ECO:0007669"/>
    <property type="project" value="UniProtKB-KW"/>
</dbReference>
<dbReference type="GO" id="GO:0000105">
    <property type="term" value="P:L-histidine biosynthetic process"/>
    <property type="evidence" value="ECO:0007669"/>
    <property type="project" value="UniProtKB-UniRule"/>
</dbReference>
<dbReference type="CDD" id="cd04731">
    <property type="entry name" value="HisF"/>
    <property type="match status" value="1"/>
</dbReference>
<dbReference type="FunFam" id="3.20.20.70:FF:000006">
    <property type="entry name" value="Imidazole glycerol phosphate synthase subunit HisF"/>
    <property type="match status" value="1"/>
</dbReference>
<dbReference type="Gene3D" id="3.20.20.70">
    <property type="entry name" value="Aldolase class I"/>
    <property type="match status" value="1"/>
</dbReference>
<dbReference type="HAMAP" id="MF_01013">
    <property type="entry name" value="HisF"/>
    <property type="match status" value="1"/>
</dbReference>
<dbReference type="InterPro" id="IPR013785">
    <property type="entry name" value="Aldolase_TIM"/>
</dbReference>
<dbReference type="InterPro" id="IPR006062">
    <property type="entry name" value="His_biosynth"/>
</dbReference>
<dbReference type="InterPro" id="IPR004651">
    <property type="entry name" value="HisF"/>
</dbReference>
<dbReference type="InterPro" id="IPR050064">
    <property type="entry name" value="IGPS_HisA/HisF"/>
</dbReference>
<dbReference type="InterPro" id="IPR011060">
    <property type="entry name" value="RibuloseP-bd_barrel"/>
</dbReference>
<dbReference type="NCBIfam" id="TIGR00735">
    <property type="entry name" value="hisF"/>
    <property type="match status" value="1"/>
</dbReference>
<dbReference type="PANTHER" id="PTHR21235:SF2">
    <property type="entry name" value="IMIDAZOLE GLYCEROL PHOSPHATE SYNTHASE HISHF"/>
    <property type="match status" value="1"/>
</dbReference>
<dbReference type="PANTHER" id="PTHR21235">
    <property type="entry name" value="IMIDAZOLE GLYCEROL PHOSPHATE SYNTHASE SUBUNIT HISF/H IGP SYNTHASE SUBUNIT HISF/H"/>
    <property type="match status" value="1"/>
</dbReference>
<dbReference type="Pfam" id="PF00977">
    <property type="entry name" value="His_biosynth"/>
    <property type="match status" value="1"/>
</dbReference>
<dbReference type="SUPFAM" id="SSF51366">
    <property type="entry name" value="Ribulose-phoshate binding barrel"/>
    <property type="match status" value="1"/>
</dbReference>
<sequence length="260" mass="27822">MLAKRIIPCLDVDNGRVVKGVQFVDIKDAGDPVEVAKRYNEQGADEITFLDITATNDERDTTYHTVERMAETVFVPLTVGGGVRKIADIRNLLNAGADKVAINSAAVFTPEFVGEASQKFGNQCIVVAIDAKRVADIEVDGIIMPRWEIFTHGGRKPTGIDAVAWASKMAELGAGELLVTSMDGDGTKKGYDLALMKQITSRVNVPVIASGGVGNLQHLAEGVLEGGVDAVLAASIFHFGEYTVQEAKAYMAAQGIQMRL</sequence>
<proteinExistence type="inferred from homology"/>
<gene>
    <name evidence="1" type="primary">hisF</name>
    <name type="ordered locus">Pcryo_2391</name>
</gene>
<feature type="chain" id="PRO_1000063123" description="Imidazole glycerol phosphate synthase subunit HisF">
    <location>
        <begin position="1"/>
        <end position="260"/>
    </location>
</feature>
<feature type="active site" evidence="1">
    <location>
        <position position="11"/>
    </location>
</feature>
<feature type="active site" evidence="1">
    <location>
        <position position="130"/>
    </location>
</feature>
<name>HIS6_PSYCK</name>
<organism>
    <name type="scientific">Psychrobacter cryohalolentis (strain ATCC BAA-1226 / DSM 17306 / VKM B-2378 / K5)</name>
    <dbReference type="NCBI Taxonomy" id="335284"/>
    <lineage>
        <taxon>Bacteria</taxon>
        <taxon>Pseudomonadati</taxon>
        <taxon>Pseudomonadota</taxon>
        <taxon>Gammaproteobacteria</taxon>
        <taxon>Moraxellales</taxon>
        <taxon>Moraxellaceae</taxon>
        <taxon>Psychrobacter</taxon>
    </lineage>
</organism>
<evidence type="ECO:0000255" key="1">
    <source>
        <dbReference type="HAMAP-Rule" id="MF_01013"/>
    </source>
</evidence>
<keyword id="KW-0028">Amino-acid biosynthesis</keyword>
<keyword id="KW-0963">Cytoplasm</keyword>
<keyword id="KW-0368">Histidine biosynthesis</keyword>
<keyword id="KW-0456">Lyase</keyword>
<comment type="function">
    <text evidence="1">IGPS catalyzes the conversion of PRFAR and glutamine to IGP, AICAR and glutamate. The HisF subunit catalyzes the cyclization activity that produces IGP and AICAR from PRFAR using the ammonia provided by the HisH subunit.</text>
</comment>
<comment type="catalytic activity">
    <reaction evidence="1">
        <text>5-[(5-phospho-1-deoxy-D-ribulos-1-ylimino)methylamino]-1-(5-phospho-beta-D-ribosyl)imidazole-4-carboxamide + L-glutamine = D-erythro-1-(imidazol-4-yl)glycerol 3-phosphate + 5-amino-1-(5-phospho-beta-D-ribosyl)imidazole-4-carboxamide + L-glutamate + H(+)</text>
        <dbReference type="Rhea" id="RHEA:24793"/>
        <dbReference type="ChEBI" id="CHEBI:15378"/>
        <dbReference type="ChEBI" id="CHEBI:29985"/>
        <dbReference type="ChEBI" id="CHEBI:58278"/>
        <dbReference type="ChEBI" id="CHEBI:58359"/>
        <dbReference type="ChEBI" id="CHEBI:58475"/>
        <dbReference type="ChEBI" id="CHEBI:58525"/>
        <dbReference type="EC" id="4.3.2.10"/>
    </reaction>
</comment>
<comment type="pathway">
    <text evidence="1">Amino-acid biosynthesis; L-histidine biosynthesis; L-histidine from 5-phospho-alpha-D-ribose 1-diphosphate: step 5/9.</text>
</comment>
<comment type="subunit">
    <text evidence="1">Heterodimer of HisH and HisF.</text>
</comment>
<comment type="subcellular location">
    <subcellularLocation>
        <location evidence="1">Cytoplasm</location>
    </subcellularLocation>
</comment>
<comment type="similarity">
    <text evidence="1">Belongs to the HisA/HisF family.</text>
</comment>
<reference key="1">
    <citation type="submission" date="2006-03" db="EMBL/GenBank/DDBJ databases">
        <title>Complete sequence of chromosome of Psychrobacter cryohalolentis K5.</title>
        <authorList>
            <consortium name="US DOE Joint Genome Institute"/>
            <person name="Copeland A."/>
            <person name="Lucas S."/>
            <person name="Lapidus A."/>
            <person name="Barry K."/>
            <person name="Detter J.C."/>
            <person name="Glavina T."/>
            <person name="Hammon N."/>
            <person name="Israni S."/>
            <person name="Dalin E."/>
            <person name="Tice H."/>
            <person name="Pitluck S."/>
            <person name="Brettin T."/>
            <person name="Bruce D."/>
            <person name="Han C."/>
            <person name="Tapia R."/>
            <person name="Sims D.R."/>
            <person name="Gilna P."/>
            <person name="Schmutz J."/>
            <person name="Larimer F."/>
            <person name="Land M."/>
            <person name="Hauser L."/>
            <person name="Kyrpides N."/>
            <person name="Kim E."/>
            <person name="Richardson P."/>
        </authorList>
    </citation>
    <scope>NUCLEOTIDE SEQUENCE [LARGE SCALE GENOMIC DNA]</scope>
    <source>
        <strain>ATCC BAA-1226 / DSM 17306 / VKM B-2378 / K5</strain>
    </source>
</reference>